<comment type="alternative products">
    <event type="alternative splicing"/>
    <isoform>
        <id>Q96MD7-3</id>
        <name>1</name>
        <sequence type="displayed"/>
    </isoform>
    <isoform>
        <id>Q96MD7-1</id>
        <name>2</name>
        <sequence type="described" ref="VSP_014430"/>
    </isoform>
    <isoform>
        <id>Q96MD7-2</id>
        <name>3</name>
        <sequence type="described" ref="VSP_014428 VSP_014429"/>
    </isoform>
</comment>
<comment type="miscellaneous">
    <molecule>Isoform 3</molecule>
    <text evidence="3">May be produced at very low levels due to a premature stop codon in the mRNA, leading to nonsense-mediated mRNA decay.</text>
</comment>
<gene>
    <name type="primary">C9orf85</name>
</gene>
<organism>
    <name type="scientific">Homo sapiens</name>
    <name type="common">Human</name>
    <dbReference type="NCBI Taxonomy" id="9606"/>
    <lineage>
        <taxon>Eukaryota</taxon>
        <taxon>Metazoa</taxon>
        <taxon>Chordata</taxon>
        <taxon>Craniata</taxon>
        <taxon>Vertebrata</taxon>
        <taxon>Euteleostomi</taxon>
        <taxon>Mammalia</taxon>
        <taxon>Eutheria</taxon>
        <taxon>Euarchontoglires</taxon>
        <taxon>Primates</taxon>
        <taxon>Haplorrhini</taxon>
        <taxon>Catarrhini</taxon>
        <taxon>Hominidae</taxon>
        <taxon>Homo</taxon>
    </lineage>
</organism>
<accession>Q96MD7</accession>
<accession>Q5W0N1</accession>
<accession>Q5W0N3</accession>
<accession>Q6PJW9</accession>
<accession>Q86U95</accession>
<evidence type="ECO:0000250" key="1">
    <source>
        <dbReference type="UniProtKB" id="Q68FU5"/>
    </source>
</evidence>
<evidence type="ECO:0000303" key="2">
    <source>
    </source>
</evidence>
<evidence type="ECO:0000305" key="3"/>
<evidence type="ECO:0007744" key="4">
    <source>
    </source>
</evidence>
<evidence type="ECO:0007744" key="5">
    <source>
    </source>
</evidence>
<evidence type="ECO:0007744" key="6">
    <source>
    </source>
</evidence>
<name>CI085_HUMAN</name>
<sequence length="179" mass="20166">MSSQKGNVARSRPQKHQNTFSFKNDKFDKSVQTKKINAKLHDGVCQRCKEVLEWRVKYSKYKPLSKPKKCVKCLQKTVKDSYHIMCRPCACELEVCAKCGKKEDIVIPWSLPLLPRLECSGRILAHHNLRLPCSSDSPASASRVAGTTGAHHHAQLIFVFLVEMGFHYVGQAGLELLTS</sequence>
<protein>
    <recommendedName>
        <fullName>Uncharacterized protein C9orf85</fullName>
    </recommendedName>
</protein>
<reference key="1">
    <citation type="journal article" date="2004" name="Nat. Genet.">
        <title>Complete sequencing and characterization of 21,243 full-length human cDNAs.</title>
        <authorList>
            <person name="Ota T."/>
            <person name="Suzuki Y."/>
            <person name="Nishikawa T."/>
            <person name="Otsuki T."/>
            <person name="Sugiyama T."/>
            <person name="Irie R."/>
            <person name="Wakamatsu A."/>
            <person name="Hayashi K."/>
            <person name="Sato H."/>
            <person name="Nagai K."/>
            <person name="Kimura K."/>
            <person name="Makita H."/>
            <person name="Sekine M."/>
            <person name="Obayashi M."/>
            <person name="Nishi T."/>
            <person name="Shibahara T."/>
            <person name="Tanaka T."/>
            <person name="Ishii S."/>
            <person name="Yamamoto J."/>
            <person name="Saito K."/>
            <person name="Kawai Y."/>
            <person name="Isono Y."/>
            <person name="Nakamura Y."/>
            <person name="Nagahari K."/>
            <person name="Murakami K."/>
            <person name="Yasuda T."/>
            <person name="Iwayanagi T."/>
            <person name="Wagatsuma M."/>
            <person name="Shiratori A."/>
            <person name="Sudo H."/>
            <person name="Hosoiri T."/>
            <person name="Kaku Y."/>
            <person name="Kodaira H."/>
            <person name="Kondo H."/>
            <person name="Sugawara M."/>
            <person name="Takahashi M."/>
            <person name="Kanda K."/>
            <person name="Yokoi T."/>
            <person name="Furuya T."/>
            <person name="Kikkawa E."/>
            <person name="Omura Y."/>
            <person name="Abe K."/>
            <person name="Kamihara K."/>
            <person name="Katsuta N."/>
            <person name="Sato K."/>
            <person name="Tanikawa M."/>
            <person name="Yamazaki M."/>
            <person name="Ninomiya K."/>
            <person name="Ishibashi T."/>
            <person name="Yamashita H."/>
            <person name="Murakawa K."/>
            <person name="Fujimori K."/>
            <person name="Tanai H."/>
            <person name="Kimata M."/>
            <person name="Watanabe M."/>
            <person name="Hiraoka S."/>
            <person name="Chiba Y."/>
            <person name="Ishida S."/>
            <person name="Ono Y."/>
            <person name="Takiguchi S."/>
            <person name="Watanabe S."/>
            <person name="Yosida M."/>
            <person name="Hotuta T."/>
            <person name="Kusano J."/>
            <person name="Kanehori K."/>
            <person name="Takahashi-Fujii A."/>
            <person name="Hara H."/>
            <person name="Tanase T.-O."/>
            <person name="Nomura Y."/>
            <person name="Togiya S."/>
            <person name="Komai F."/>
            <person name="Hara R."/>
            <person name="Takeuchi K."/>
            <person name="Arita M."/>
            <person name="Imose N."/>
            <person name="Musashino K."/>
            <person name="Yuuki H."/>
            <person name="Oshima A."/>
            <person name="Sasaki N."/>
            <person name="Aotsuka S."/>
            <person name="Yoshikawa Y."/>
            <person name="Matsunawa H."/>
            <person name="Ichihara T."/>
            <person name="Shiohata N."/>
            <person name="Sano S."/>
            <person name="Moriya S."/>
            <person name="Momiyama H."/>
            <person name="Satoh N."/>
            <person name="Takami S."/>
            <person name="Terashima Y."/>
            <person name="Suzuki O."/>
            <person name="Nakagawa S."/>
            <person name="Senoh A."/>
            <person name="Mizoguchi H."/>
            <person name="Goto Y."/>
            <person name="Shimizu F."/>
            <person name="Wakebe H."/>
            <person name="Hishigaki H."/>
            <person name="Watanabe T."/>
            <person name="Sugiyama A."/>
            <person name="Takemoto M."/>
            <person name="Kawakami B."/>
            <person name="Yamazaki M."/>
            <person name="Watanabe K."/>
            <person name="Kumagai A."/>
            <person name="Itakura S."/>
            <person name="Fukuzumi Y."/>
            <person name="Fujimori Y."/>
            <person name="Komiyama M."/>
            <person name="Tashiro H."/>
            <person name="Tanigami A."/>
            <person name="Fujiwara T."/>
            <person name="Ono T."/>
            <person name="Yamada K."/>
            <person name="Fujii Y."/>
            <person name="Ozaki K."/>
            <person name="Hirao M."/>
            <person name="Ohmori Y."/>
            <person name="Kawabata A."/>
            <person name="Hikiji T."/>
            <person name="Kobatake N."/>
            <person name="Inagaki H."/>
            <person name="Ikema Y."/>
            <person name="Okamoto S."/>
            <person name="Okitani R."/>
            <person name="Kawakami T."/>
            <person name="Noguchi S."/>
            <person name="Itoh T."/>
            <person name="Shigeta K."/>
            <person name="Senba T."/>
            <person name="Matsumura K."/>
            <person name="Nakajima Y."/>
            <person name="Mizuno T."/>
            <person name="Morinaga M."/>
            <person name="Sasaki M."/>
            <person name="Togashi T."/>
            <person name="Oyama M."/>
            <person name="Hata H."/>
            <person name="Watanabe M."/>
            <person name="Komatsu T."/>
            <person name="Mizushima-Sugano J."/>
            <person name="Satoh T."/>
            <person name="Shirai Y."/>
            <person name="Takahashi Y."/>
            <person name="Nakagawa K."/>
            <person name="Okumura K."/>
            <person name="Nagase T."/>
            <person name="Nomura N."/>
            <person name="Kikuchi H."/>
            <person name="Masuho Y."/>
            <person name="Yamashita R."/>
            <person name="Nakai K."/>
            <person name="Yada T."/>
            <person name="Nakamura Y."/>
            <person name="Ohara O."/>
            <person name="Isogai T."/>
            <person name="Sugano S."/>
        </authorList>
    </citation>
    <scope>NUCLEOTIDE SEQUENCE [LARGE SCALE MRNA] (ISOFORM 1)</scope>
    <source>
        <tissue>Small intestine</tissue>
    </source>
</reference>
<reference key="2">
    <citation type="journal article" date="2004" name="Nature">
        <title>DNA sequence and analysis of human chromosome 9.</title>
        <authorList>
            <person name="Humphray S.J."/>
            <person name="Oliver K."/>
            <person name="Hunt A.R."/>
            <person name="Plumb R.W."/>
            <person name="Loveland J.E."/>
            <person name="Howe K.L."/>
            <person name="Andrews T.D."/>
            <person name="Searle S."/>
            <person name="Hunt S.E."/>
            <person name="Scott C.E."/>
            <person name="Jones M.C."/>
            <person name="Ainscough R."/>
            <person name="Almeida J.P."/>
            <person name="Ambrose K.D."/>
            <person name="Ashwell R.I.S."/>
            <person name="Babbage A.K."/>
            <person name="Babbage S."/>
            <person name="Bagguley C.L."/>
            <person name="Bailey J."/>
            <person name="Banerjee R."/>
            <person name="Barker D.J."/>
            <person name="Barlow K.F."/>
            <person name="Bates K."/>
            <person name="Beasley H."/>
            <person name="Beasley O."/>
            <person name="Bird C.P."/>
            <person name="Bray-Allen S."/>
            <person name="Brown A.J."/>
            <person name="Brown J.Y."/>
            <person name="Burford D."/>
            <person name="Burrill W."/>
            <person name="Burton J."/>
            <person name="Carder C."/>
            <person name="Carter N.P."/>
            <person name="Chapman J.C."/>
            <person name="Chen Y."/>
            <person name="Clarke G."/>
            <person name="Clark S.Y."/>
            <person name="Clee C.M."/>
            <person name="Clegg S."/>
            <person name="Collier R.E."/>
            <person name="Corby N."/>
            <person name="Crosier M."/>
            <person name="Cummings A.T."/>
            <person name="Davies J."/>
            <person name="Dhami P."/>
            <person name="Dunn M."/>
            <person name="Dutta I."/>
            <person name="Dyer L.W."/>
            <person name="Earthrowl M.E."/>
            <person name="Faulkner L."/>
            <person name="Fleming C.J."/>
            <person name="Frankish A."/>
            <person name="Frankland J.A."/>
            <person name="French L."/>
            <person name="Fricker D.G."/>
            <person name="Garner P."/>
            <person name="Garnett J."/>
            <person name="Ghori J."/>
            <person name="Gilbert J.G.R."/>
            <person name="Glison C."/>
            <person name="Grafham D.V."/>
            <person name="Gribble S."/>
            <person name="Griffiths C."/>
            <person name="Griffiths-Jones S."/>
            <person name="Grocock R."/>
            <person name="Guy J."/>
            <person name="Hall R.E."/>
            <person name="Hammond S."/>
            <person name="Harley J.L."/>
            <person name="Harrison E.S.I."/>
            <person name="Hart E.A."/>
            <person name="Heath P.D."/>
            <person name="Henderson C.D."/>
            <person name="Hopkins B.L."/>
            <person name="Howard P.J."/>
            <person name="Howden P.J."/>
            <person name="Huckle E."/>
            <person name="Johnson C."/>
            <person name="Johnson D."/>
            <person name="Joy A.A."/>
            <person name="Kay M."/>
            <person name="Keenan S."/>
            <person name="Kershaw J.K."/>
            <person name="Kimberley A.M."/>
            <person name="King A."/>
            <person name="Knights A."/>
            <person name="Laird G.K."/>
            <person name="Langford C."/>
            <person name="Lawlor S."/>
            <person name="Leongamornlert D.A."/>
            <person name="Leversha M."/>
            <person name="Lloyd C."/>
            <person name="Lloyd D.M."/>
            <person name="Lovell J."/>
            <person name="Martin S."/>
            <person name="Mashreghi-Mohammadi M."/>
            <person name="Matthews L."/>
            <person name="McLaren S."/>
            <person name="McLay K.E."/>
            <person name="McMurray A."/>
            <person name="Milne S."/>
            <person name="Nickerson T."/>
            <person name="Nisbett J."/>
            <person name="Nordsiek G."/>
            <person name="Pearce A.V."/>
            <person name="Peck A.I."/>
            <person name="Porter K.M."/>
            <person name="Pandian R."/>
            <person name="Pelan S."/>
            <person name="Phillimore B."/>
            <person name="Povey S."/>
            <person name="Ramsey Y."/>
            <person name="Rand V."/>
            <person name="Scharfe M."/>
            <person name="Sehra H.K."/>
            <person name="Shownkeen R."/>
            <person name="Sims S.K."/>
            <person name="Skuce C.D."/>
            <person name="Smith M."/>
            <person name="Steward C.A."/>
            <person name="Swarbreck D."/>
            <person name="Sycamore N."/>
            <person name="Tester J."/>
            <person name="Thorpe A."/>
            <person name="Tracey A."/>
            <person name="Tromans A."/>
            <person name="Thomas D.W."/>
            <person name="Wall M."/>
            <person name="Wallis J.M."/>
            <person name="West A.P."/>
            <person name="Whitehead S.L."/>
            <person name="Willey D.L."/>
            <person name="Williams S.A."/>
            <person name="Wilming L."/>
            <person name="Wray P.W."/>
            <person name="Young L."/>
            <person name="Ashurst J.L."/>
            <person name="Coulson A."/>
            <person name="Blocker H."/>
            <person name="Durbin R.M."/>
            <person name="Sulston J.E."/>
            <person name="Hubbard T."/>
            <person name="Jackson M.J."/>
            <person name="Bentley D.R."/>
            <person name="Beck S."/>
            <person name="Rogers J."/>
            <person name="Dunham I."/>
        </authorList>
    </citation>
    <scope>NUCLEOTIDE SEQUENCE [LARGE SCALE GENOMIC DNA]</scope>
</reference>
<reference key="3">
    <citation type="journal article" date="2004" name="Genome Res.">
        <title>The status, quality, and expansion of the NIH full-length cDNA project: the Mammalian Gene Collection (MGC).</title>
        <authorList>
            <consortium name="The MGC Project Team"/>
        </authorList>
    </citation>
    <scope>NUCLEOTIDE SEQUENCE [LARGE SCALE MRNA] (ISOFORMS 2 AND 3)</scope>
    <source>
        <tissue>Kidney</tissue>
        <tissue>Skin</tissue>
    </source>
</reference>
<reference key="4">
    <citation type="journal article" date="2008" name="Proc. Natl. Acad. Sci. U.S.A.">
        <title>A quantitative atlas of mitotic phosphorylation.</title>
        <authorList>
            <person name="Dephoure N."/>
            <person name="Zhou C."/>
            <person name="Villen J."/>
            <person name="Beausoleil S.A."/>
            <person name="Bakalarski C.E."/>
            <person name="Elledge S.J."/>
            <person name="Gygi S.P."/>
        </authorList>
    </citation>
    <scope>PHOSPHORYLATION [LARGE SCALE ANALYSIS] AT SER-137 (ISOFORM 2)</scope>
    <scope>IDENTIFICATION BY MASS SPECTROMETRY [LARGE SCALE ANALYSIS]</scope>
    <source>
        <tissue>Cervix carcinoma</tissue>
    </source>
</reference>
<reference key="5">
    <citation type="journal article" date="2009" name="Sci. Signal.">
        <title>Quantitative phosphoproteomic analysis of T cell receptor signaling reveals system-wide modulation of protein-protein interactions.</title>
        <authorList>
            <person name="Mayya V."/>
            <person name="Lundgren D.H."/>
            <person name="Hwang S.-I."/>
            <person name="Rezaul K."/>
            <person name="Wu L."/>
            <person name="Eng J.K."/>
            <person name="Rodionov V."/>
            <person name="Han D.K."/>
        </authorList>
    </citation>
    <scope>PHOSPHORYLATION [LARGE SCALE ANALYSIS] AT SER-137 (ISOFORM 2)</scope>
    <scope>IDENTIFICATION BY MASS SPECTROMETRY [LARGE SCALE ANALYSIS]</scope>
    <source>
        <tissue>Leukemic T-cell</tissue>
    </source>
</reference>
<reference key="6">
    <citation type="journal article" date="2012" name="Proc. Natl. Acad. Sci. U.S.A.">
        <title>N-terminal acetylome analyses and functional insights of the N-terminal acetyltransferase NatB.</title>
        <authorList>
            <person name="Van Damme P."/>
            <person name="Lasa M."/>
            <person name="Polevoda B."/>
            <person name="Gazquez C."/>
            <person name="Elosegui-Artola A."/>
            <person name="Kim D.S."/>
            <person name="De Juan-Pardo E."/>
            <person name="Demeyer K."/>
            <person name="Hole K."/>
            <person name="Larrea E."/>
            <person name="Timmerman E."/>
            <person name="Prieto J."/>
            <person name="Arnesen T."/>
            <person name="Sherman F."/>
            <person name="Gevaert K."/>
            <person name="Aldabe R."/>
        </authorList>
    </citation>
    <scope>ACETYLATION [LARGE SCALE ANALYSIS] AT SER-2</scope>
    <scope>CLEAVAGE OF INITIATOR METHIONINE [LARGE SCALE ANALYSIS]</scope>
    <scope>IDENTIFICATION BY MASS SPECTROMETRY [LARGE SCALE ANALYSIS]</scope>
</reference>
<keyword id="KW-0007">Acetylation</keyword>
<keyword id="KW-0025">Alternative splicing</keyword>
<keyword id="KW-0597">Phosphoprotein</keyword>
<keyword id="KW-1267">Proteomics identification</keyword>
<keyword id="KW-1185">Reference proteome</keyword>
<dbReference type="EMBL" id="AK057071">
    <property type="status" value="NOT_ANNOTATED_CDS"/>
    <property type="molecule type" value="mRNA"/>
</dbReference>
<dbReference type="EMBL" id="AL138751">
    <property type="status" value="NOT_ANNOTATED_CDS"/>
    <property type="molecule type" value="Genomic_DNA"/>
</dbReference>
<dbReference type="EMBL" id="BC010179">
    <property type="status" value="NOT_ANNOTATED_CDS"/>
    <property type="molecule type" value="mRNA"/>
</dbReference>
<dbReference type="EMBL" id="BC052375">
    <property type="protein sequence ID" value="AAH52375.1"/>
    <property type="molecule type" value="mRNA"/>
</dbReference>
<dbReference type="CCDS" id="CCDS6639.1">
    <molecule id="Q96MD7-1"/>
</dbReference>
<dbReference type="CCDS" id="CCDS94421.1">
    <molecule id="Q96MD7-3"/>
</dbReference>
<dbReference type="RefSeq" id="NP_001351982.1">
    <molecule id="Q96MD7-3"/>
    <property type="nucleotide sequence ID" value="NM_001365053.2"/>
</dbReference>
<dbReference type="RefSeq" id="NP_872311.2">
    <molecule id="Q96MD7-1"/>
    <property type="nucleotide sequence ID" value="NM_182505.3"/>
</dbReference>
<dbReference type="SMR" id="Q96MD7"/>
<dbReference type="BioGRID" id="126507">
    <property type="interactions" value="10"/>
</dbReference>
<dbReference type="FunCoup" id="Q96MD7">
    <property type="interactions" value="659"/>
</dbReference>
<dbReference type="IntAct" id="Q96MD7">
    <property type="interactions" value="8"/>
</dbReference>
<dbReference type="STRING" id="9606.ENSP00000334289"/>
<dbReference type="TCDB" id="8.A.207.1.1">
    <property type="family name" value="the zip8 regulator 2 (zip8r2) family"/>
</dbReference>
<dbReference type="iPTMnet" id="Q96MD7"/>
<dbReference type="PhosphoSitePlus" id="Q96MD7"/>
<dbReference type="BioMuta" id="C9orf85"/>
<dbReference type="DMDM" id="68565262"/>
<dbReference type="jPOST" id="Q96MD7"/>
<dbReference type="MassIVE" id="Q96MD7"/>
<dbReference type="PaxDb" id="9606-ENSP00000334289"/>
<dbReference type="PeptideAtlas" id="Q96MD7"/>
<dbReference type="ProteomicsDB" id="77336">
    <molecule id="Q96MD7-3"/>
</dbReference>
<dbReference type="ProteomicsDB" id="77337">
    <molecule id="Q96MD7-1"/>
</dbReference>
<dbReference type="ProteomicsDB" id="77338">
    <molecule id="Q96MD7-2"/>
</dbReference>
<dbReference type="Pumba" id="Q96MD7"/>
<dbReference type="Antibodypedia" id="60695">
    <property type="antibodies" value="55 antibodies from 9 providers"/>
</dbReference>
<dbReference type="DNASU" id="138241"/>
<dbReference type="Ensembl" id="ENST00000334731.7">
    <molecule id="Q96MD7-1"/>
    <property type="protein sequence ID" value="ENSP00000334289.2"/>
    <property type="gene ID" value="ENSG00000155621.15"/>
</dbReference>
<dbReference type="Ensembl" id="ENST00000377031.7">
    <molecule id="Q96MD7-3"/>
    <property type="protein sequence ID" value="ENSP00000366230.3"/>
    <property type="gene ID" value="ENSG00000155621.15"/>
</dbReference>
<dbReference type="Ensembl" id="ENST00000479413.1">
    <molecule id="Q96MD7-2"/>
    <property type="protein sequence ID" value="ENSP00000433086.1"/>
    <property type="gene ID" value="ENSG00000155621.15"/>
</dbReference>
<dbReference type="GeneID" id="138241"/>
<dbReference type="KEGG" id="hsa:138241"/>
<dbReference type="MANE-Select" id="ENST00000334731.7">
    <molecule id="Q96MD7-1"/>
    <property type="protein sequence ID" value="ENSP00000334289.2"/>
    <property type="RefSeq nucleotide sequence ID" value="NM_182505.5"/>
    <property type="RefSeq protein sequence ID" value="NP_872311.2"/>
</dbReference>
<dbReference type="UCSC" id="uc004ain.4">
    <molecule id="Q96MD7-3"/>
    <property type="organism name" value="human"/>
</dbReference>
<dbReference type="AGR" id="HGNC:28784"/>
<dbReference type="CTD" id="138241"/>
<dbReference type="GeneCards" id="C9orf85"/>
<dbReference type="HGNC" id="HGNC:28784">
    <property type="gene designation" value="C9orf85"/>
</dbReference>
<dbReference type="HPA" id="ENSG00000155621">
    <property type="expression patterns" value="Low tissue specificity"/>
</dbReference>
<dbReference type="MIM" id="620761">
    <property type="type" value="gene"/>
</dbReference>
<dbReference type="neXtProt" id="NX_Q96MD7"/>
<dbReference type="OpenTargets" id="ENSG00000155621"/>
<dbReference type="PharmGKB" id="PA134985322"/>
<dbReference type="VEuPathDB" id="HostDB:ENSG00000155621"/>
<dbReference type="eggNOG" id="KOG3241">
    <property type="taxonomic scope" value="Eukaryota"/>
</dbReference>
<dbReference type="GeneTree" id="ENSGT00440000033805"/>
<dbReference type="HOGENOM" id="CLU_218121_0_0_1"/>
<dbReference type="InParanoid" id="Q96MD7"/>
<dbReference type="OMA" id="CACELEL"/>
<dbReference type="OrthoDB" id="250548at2759"/>
<dbReference type="PAN-GO" id="Q96MD7">
    <property type="GO annotations" value="0 GO annotations based on evolutionary models"/>
</dbReference>
<dbReference type="PhylomeDB" id="Q96MD7"/>
<dbReference type="TreeFam" id="TF324614"/>
<dbReference type="PathwayCommons" id="Q96MD7"/>
<dbReference type="BioGRID-ORCS" id="138241">
    <property type="hits" value="31 hits in 1100 CRISPR screens"/>
</dbReference>
<dbReference type="ChiTaRS" id="C9orf85">
    <property type="organism name" value="human"/>
</dbReference>
<dbReference type="GenomeRNAi" id="138241"/>
<dbReference type="Pharos" id="Q96MD7">
    <property type="development level" value="Tdark"/>
</dbReference>
<dbReference type="PRO" id="PR:Q96MD7"/>
<dbReference type="Proteomes" id="UP000005640">
    <property type="component" value="Chromosome 9"/>
</dbReference>
<dbReference type="RNAct" id="Q96MD7">
    <property type="molecule type" value="protein"/>
</dbReference>
<dbReference type="Bgee" id="ENSG00000155621">
    <property type="expression patterns" value="Expressed in epithelial cell of pancreas and 178 other cell types or tissues"/>
</dbReference>
<dbReference type="ExpressionAtlas" id="Q96MD7">
    <property type="expression patterns" value="baseline and differential"/>
</dbReference>
<dbReference type="InterPro" id="IPR019351">
    <property type="entry name" value="DUF2039"/>
</dbReference>
<dbReference type="PANTHER" id="PTHR22876:SF5">
    <property type="entry name" value="CHROMOSOME 9 OPEN READING FRAME 85"/>
    <property type="match status" value="1"/>
</dbReference>
<dbReference type="PANTHER" id="PTHR22876">
    <property type="entry name" value="ZGC:101016"/>
    <property type="match status" value="1"/>
</dbReference>
<dbReference type="Pfam" id="PF10217">
    <property type="entry name" value="DUF2039"/>
    <property type="match status" value="1"/>
</dbReference>
<dbReference type="PRINTS" id="PR02045">
    <property type="entry name" value="F138DOMAIN"/>
</dbReference>
<feature type="initiator methionine" description="Removed" evidence="6">
    <location>
        <position position="1"/>
    </location>
</feature>
<feature type="chain" id="PRO_0000089720" description="Uncharacterized protein C9orf85">
    <location>
        <begin position="2"/>
        <end position="179"/>
    </location>
</feature>
<feature type="modified residue" description="N-acetylserine" evidence="6">
    <location>
        <position position="2"/>
    </location>
</feature>
<feature type="modified residue" description="Phosphoserine" evidence="1">
    <location>
        <position position="137"/>
    </location>
</feature>
<feature type="splice variant" id="VSP_014428" description="In isoform 3." evidence="2">
    <original>K</original>
    <variation>C</variation>
    <location>
        <position position="35"/>
    </location>
</feature>
<feature type="splice variant" id="VSP_014429" description="In isoform 3." evidence="2">
    <location>
        <begin position="36"/>
        <end position="179"/>
    </location>
</feature>
<feature type="splice variant" id="VSP_014430" description="In isoform 2." evidence="2">
    <original>WSLPLLPRLECSGRILAHHNLRLPCSSDSPASASRVAGTTGAHHHAQLIFVFLVEMGFHYVGQAGLELLTS</original>
    <variation>LNKETEKIEHTENNLSSNHRRSCRRNEESDDDLDFDIDLEDTGGDHQMN</variation>
    <location>
        <begin position="109"/>
        <end position="179"/>
    </location>
</feature>
<feature type="modified residue" description="Phosphoserine" evidence="4 5">
    <location sequence="Q96MD7-1">
        <position position="137"/>
    </location>
</feature>
<proteinExistence type="evidence at protein level"/>